<keyword id="KW-1185">Reference proteome</keyword>
<proteinExistence type="predicted"/>
<gene>
    <name type="primary">S7</name>
</gene>
<dbReference type="EMBL" id="AY789927">
    <property type="protein sequence ID" value="AAX18651.1"/>
    <property type="molecule type" value="Genomic_RNA"/>
</dbReference>
<dbReference type="RefSeq" id="YP_249766.1">
    <property type="nucleotide sequence ID" value="NC_007163.1"/>
</dbReference>
<dbReference type="KEGG" id="vg:5130479"/>
<dbReference type="Proteomes" id="UP000001677">
    <property type="component" value="Genome"/>
</dbReference>
<dbReference type="InterPro" id="IPR010521">
    <property type="entry name" value="Fijivirus_VP7-1-like"/>
</dbReference>
<dbReference type="Pfam" id="PF06503">
    <property type="entry name" value="DUF1101"/>
    <property type="match status" value="1"/>
</dbReference>
<feature type="chain" id="PRO_0000403398" description="Uncharacterized protein VP7-1">
    <location>
        <begin position="1"/>
        <end position="364"/>
    </location>
</feature>
<organismHost>
    <name type="scientific">Saccharum officinarum</name>
    <name type="common">Sugarcane</name>
    <dbReference type="NCBI Taxonomy" id="4547"/>
</organismHost>
<accession>Q4VPH8</accession>
<name>VP71_FDVS</name>
<sequence>MERSSREHSKYSKANTLNETYQMRMYKDDSTPDYCYSEISVGLSSSSPKMSLSDYFSAVSVTYGDEARLDEYKPLLYSDLLFAESYELDVDINLLVWQLLSSNQDSKSLCVNVLRMLHTYSLGNAYMGGGIYHFSQGTNTETLSDIVDILRLIGRLAKIIIKTKFSQMELKCVQTHLIYYFTGKAYKSLSLSWDSKSILSTSNGYSTSEGLLDYYIRNKLDLFKALYSKNLVYGGNYYLIYQVLVYYYIITNGRYSTGFNLRKDSIKHYNIPNDNPKMCNSILPRKPNLSMMYIRAILIMVMIKDYSPIKLVPLYLNALEIEDPAYMSSRITDGGIRMETDNMASTPDISRVLPAYFNGVKNDQ</sequence>
<protein>
    <recommendedName>
        <fullName>Uncharacterized protein VP7-1</fullName>
    </recommendedName>
</protein>
<reference key="1">
    <citation type="submission" date="2004-10" db="EMBL/GenBank/DDBJ databases">
        <title>Sequencing and analysis of segments 2, 4 and 7 of Fiji disease virus provides the complete genome.</title>
        <authorList>
            <person name="Harding R.M."/>
            <person name="Burns P."/>
            <person name="Dale J.L."/>
        </authorList>
    </citation>
    <scope>NUCLEOTIDE SEQUENCE [GENOMIC RNA]</scope>
</reference>
<organism>
    <name type="scientific">Fiji disease virus (isolate Sugarcane)</name>
    <name type="common">FDV</name>
    <dbReference type="NCBI Taxonomy" id="648172"/>
    <lineage>
        <taxon>Viruses</taxon>
        <taxon>Riboviria</taxon>
        <taxon>Orthornavirae</taxon>
        <taxon>Duplornaviricota</taxon>
        <taxon>Resentoviricetes</taxon>
        <taxon>Reovirales</taxon>
        <taxon>Spinareoviridae</taxon>
        <taxon>Fijivirus</taxon>
        <taxon>Fiji disease virus</taxon>
    </lineage>
</organism>